<proteinExistence type="evidence at protein level"/>
<name>SC5A5_MOUSE</name>
<comment type="function">
    <text evidence="2 5 6 7">Sodium:iodide symporter that mediates the transport of iodide into the thyroid gland (PubMed:11716040, PubMed:18372236, PubMed:32084174). Can also mediate the transport of chlorate, thiocynate, nitrate and selenocynate (By similarity).</text>
</comment>
<comment type="catalytic activity">
    <reaction evidence="5 6 7">
        <text>iodide(out) + 2 Na(+)(out) = iodide(in) + 2 Na(+)(in)</text>
        <dbReference type="Rhea" id="RHEA:71207"/>
        <dbReference type="ChEBI" id="CHEBI:16382"/>
        <dbReference type="ChEBI" id="CHEBI:29101"/>
    </reaction>
</comment>
<comment type="catalytic activity">
    <reaction evidence="2">
        <text>chlorate(out) + 2 Na(+)(out) = chlorate(in) + 2 Na(+)(in)</text>
        <dbReference type="Rhea" id="RHEA:71211"/>
        <dbReference type="ChEBI" id="CHEBI:29101"/>
        <dbReference type="ChEBI" id="CHEBI:49709"/>
    </reaction>
</comment>
<comment type="catalytic activity">
    <reaction evidence="2">
        <text>thiocyanate(out) + 2 Na(+)(out) = thiocyanate(in) + 2 Na(+)(in)</text>
        <dbReference type="Rhea" id="RHEA:71215"/>
        <dbReference type="ChEBI" id="CHEBI:18022"/>
        <dbReference type="ChEBI" id="CHEBI:29101"/>
    </reaction>
</comment>
<comment type="catalytic activity">
    <reaction evidence="2">
        <text>nitrate(out) + 2 Na(+)(out) = nitrate(in) + 2 Na(+)(in)</text>
        <dbReference type="Rhea" id="RHEA:71219"/>
        <dbReference type="ChEBI" id="CHEBI:17632"/>
        <dbReference type="ChEBI" id="CHEBI:29101"/>
    </reaction>
</comment>
<comment type="catalytic activity">
    <reaction evidence="2">
        <text>selenocyanate(out) + 2 Na(+)(out) = selenocyanate(in) + 2 Na(+)(in)</text>
        <dbReference type="Rhea" id="RHEA:71227"/>
        <dbReference type="ChEBI" id="CHEBI:29101"/>
        <dbReference type="ChEBI" id="CHEBI:29445"/>
    </reaction>
</comment>
<comment type="activity regulation">
    <text evidence="1 7">Perchlorate inhibits iodide transport activity (PubMed:32084174). Oxyanions inhibit iodide transport activity by blocking the binding sites for iodide and one of the sodium ions (By similarity).</text>
</comment>
<comment type="biophysicochemical properties">
    <kinetics>
        <KM evidence="6">26 uM for iodide</KM>
    </kinetics>
</comment>
<comment type="subunit">
    <text evidence="6">Monomer.</text>
</comment>
<comment type="subcellular location">
    <subcellularLocation>
        <location evidence="6">Cell membrane</location>
        <topology evidence="1">Multi-pass membrane protein</topology>
    </subcellularLocation>
    <subcellularLocation>
        <location evidence="6">Cytoplasm</location>
    </subcellularLocation>
</comment>
<comment type="PTM">
    <text evidence="6">Glycosylated.</text>
</comment>
<comment type="similarity">
    <text evidence="10">Belongs to the sodium:solute symporter (SSF) (TC 2.A.21) family.</text>
</comment>
<reference key="1">
    <citation type="submission" date="2000-02" db="EMBL/GenBank/DDBJ databases">
        <title>Cloning of the mouse sodium iodide symporter (mNIS) and its expression in the mammary gland.</title>
        <authorList>
            <person name="Perron B."/>
            <person name="Rodriguez A.-M."/>
            <person name="Leblanc G."/>
            <person name="Pourcher T."/>
        </authorList>
    </citation>
    <scope>NUCLEOTIDE SEQUENCE [MRNA]</scope>
    <source>
        <strain>C57BL/6 X DBA/2</strain>
    </source>
</reference>
<reference key="2">
    <citation type="journal article" date="2001" name="Thyroid">
        <title>Cloning of the mouse sodium iodide symporter.</title>
        <authorList>
            <person name="Pinke L.A."/>
            <person name="Dean D.S."/>
            <person name="Bergert E.R."/>
            <person name="Spitzweg C."/>
            <person name="Dutton C.M."/>
            <person name="Morris J.C."/>
        </authorList>
    </citation>
    <scope>NUCLEOTIDE SEQUENCE [MRNA]</scope>
    <scope>FUNCTION</scope>
    <scope>TRANSPORTER ACTIVITY</scope>
    <source>
        <strain>BALB/cJ</strain>
    </source>
</reference>
<reference key="3">
    <citation type="journal article" date="2004" name="Genome Res.">
        <title>The status, quality, and expansion of the NIH full-length cDNA project: the Mammalian Gene Collection (MGC).</title>
        <authorList>
            <consortium name="The MGC Project Team"/>
        </authorList>
    </citation>
    <scope>NUCLEOTIDE SEQUENCE [LARGE SCALE MRNA]</scope>
    <source>
        <tissue>Brain</tissue>
    </source>
</reference>
<reference key="4">
    <citation type="journal article" date="2008" name="J. Endocrinol.">
        <title>Comparison of expressed human and mouse sodium/iodide symporters reveals differences in transport properties and subcellular localization.</title>
        <authorList>
            <person name="Dayem M."/>
            <person name="Basquin C."/>
            <person name="Navarro V."/>
            <person name="Carrier P."/>
            <person name="Marsault R."/>
            <person name="Chang P."/>
            <person name="Huc S."/>
            <person name="Darrouzet E."/>
            <person name="Lindenthal S."/>
            <person name="Pourcher T."/>
        </authorList>
    </citation>
    <scope>FUNCTION</scope>
    <scope>TRANSPORTER ACTIVITY</scope>
    <scope>BIOPHYSICOCHEMICAL PROPERTIES</scope>
    <scope>SUBCELLULAR LOCATION</scope>
    <scope>SUBUNIT</scope>
    <scope>GLYCOSYLATION</scope>
</reference>
<reference key="5">
    <citation type="journal article" date="2020" name="PLoS ONE">
        <title>Inter-species variation in monovalent anion substrate selectivity and inhibitor sensitivity in the sodium iodide symporter (NIS).</title>
        <authorList>
            <person name="Concilio S.C."/>
            <person name="Zhekova H.R."/>
            <person name="Noskov S.Y."/>
            <person name="Russell S.J."/>
        </authorList>
    </citation>
    <scope>FUNCTION</scope>
    <scope>TRANSPORTER ACTIVITY</scope>
    <scope>ACTIVITY REGULATION</scope>
</reference>
<dbReference type="EMBL" id="AF235001">
    <property type="protein sequence ID" value="AAK00232.1"/>
    <property type="molecule type" value="mRNA"/>
</dbReference>
<dbReference type="EMBL" id="AF380353">
    <property type="protein sequence ID" value="AAK59274.1"/>
    <property type="molecule type" value="mRNA"/>
</dbReference>
<dbReference type="EMBL" id="BC137650">
    <property type="protein sequence ID" value="AAI37651.1"/>
    <property type="molecule type" value="mRNA"/>
</dbReference>
<dbReference type="EMBL" id="BC137651">
    <property type="protein sequence ID" value="AAI37652.1"/>
    <property type="molecule type" value="mRNA"/>
</dbReference>
<dbReference type="CCDS" id="CCDS22385.1"/>
<dbReference type="SMR" id="Q99PN0"/>
<dbReference type="FunCoup" id="Q99PN0">
    <property type="interactions" value="301"/>
</dbReference>
<dbReference type="STRING" id="10090.ENSMUSP00000000809"/>
<dbReference type="GlyCosmos" id="Q99PN0">
    <property type="glycosylation" value="2 sites, No reported glycans"/>
</dbReference>
<dbReference type="GlyGen" id="Q99PN0">
    <property type="glycosylation" value="3 sites"/>
</dbReference>
<dbReference type="PhosphoSitePlus" id="Q99PN0"/>
<dbReference type="PaxDb" id="10090-ENSMUSP00000000809"/>
<dbReference type="ProteomicsDB" id="256605"/>
<dbReference type="AGR" id="MGI:2149330"/>
<dbReference type="MGI" id="MGI:2149330">
    <property type="gene designation" value="Slc5a5"/>
</dbReference>
<dbReference type="eggNOG" id="KOG2349">
    <property type="taxonomic scope" value="Eukaryota"/>
</dbReference>
<dbReference type="InParanoid" id="Q99PN0"/>
<dbReference type="PhylomeDB" id="Q99PN0"/>
<dbReference type="Reactome" id="R-MMU-209968">
    <property type="pathway name" value="Thyroxine biosynthesis"/>
</dbReference>
<dbReference type="Reactome" id="R-MMU-428643">
    <property type="pathway name" value="Organic anion transporters"/>
</dbReference>
<dbReference type="PRO" id="PR:Q99PN0"/>
<dbReference type="Proteomes" id="UP000000589">
    <property type="component" value="Unplaced"/>
</dbReference>
<dbReference type="RNAct" id="Q99PN0">
    <property type="molecule type" value="protein"/>
</dbReference>
<dbReference type="GO" id="GO:0005737">
    <property type="term" value="C:cytoplasm"/>
    <property type="evidence" value="ECO:0000314"/>
    <property type="project" value="UniProtKB"/>
</dbReference>
<dbReference type="GO" id="GO:0005886">
    <property type="term" value="C:plasma membrane"/>
    <property type="evidence" value="ECO:0000314"/>
    <property type="project" value="UniProtKB"/>
</dbReference>
<dbReference type="GO" id="GO:0008507">
    <property type="term" value="F:sodium:iodide symporter activity"/>
    <property type="evidence" value="ECO:0000314"/>
    <property type="project" value="UniProtKB"/>
</dbReference>
<dbReference type="GO" id="GO:0015293">
    <property type="term" value="F:symporter activity"/>
    <property type="evidence" value="ECO:0000314"/>
    <property type="project" value="MGI"/>
</dbReference>
<dbReference type="GO" id="GO:0006590">
    <property type="term" value="P:thyroid hormone generation"/>
    <property type="evidence" value="ECO:0007669"/>
    <property type="project" value="InterPro"/>
</dbReference>
<dbReference type="CDD" id="cd11503">
    <property type="entry name" value="SLC5sbd_NIS"/>
    <property type="match status" value="1"/>
</dbReference>
<dbReference type="FunFam" id="1.20.1730.10:FF:000007">
    <property type="entry name" value="Sodium-coupled monocarboxylate transporter 2"/>
    <property type="match status" value="1"/>
</dbReference>
<dbReference type="Gene3D" id="1.20.1730.10">
    <property type="entry name" value="Sodium/glucose cotransporter"/>
    <property type="match status" value="1"/>
</dbReference>
<dbReference type="InterPro" id="IPR038377">
    <property type="entry name" value="Na/Glc_symporter_sf"/>
</dbReference>
<dbReference type="InterPro" id="IPR001734">
    <property type="entry name" value="Na/solute_symporter"/>
</dbReference>
<dbReference type="InterPro" id="IPR018212">
    <property type="entry name" value="Na/solute_symporter_CS"/>
</dbReference>
<dbReference type="InterPro" id="IPR035689">
    <property type="entry name" value="SLC5A5"/>
</dbReference>
<dbReference type="InterPro" id="IPR051163">
    <property type="entry name" value="Sodium:Solute_Symporter_SSF"/>
</dbReference>
<dbReference type="NCBIfam" id="TIGR00813">
    <property type="entry name" value="sss"/>
    <property type="match status" value="1"/>
</dbReference>
<dbReference type="PANTHER" id="PTHR42985">
    <property type="entry name" value="SODIUM-COUPLED MONOCARBOXYLATE TRANSPORTER"/>
    <property type="match status" value="1"/>
</dbReference>
<dbReference type="PANTHER" id="PTHR42985:SF11">
    <property type="entry name" value="SODIUM_IODIDE COTRANSPORTER"/>
    <property type="match status" value="1"/>
</dbReference>
<dbReference type="Pfam" id="PF00474">
    <property type="entry name" value="SSF"/>
    <property type="match status" value="1"/>
</dbReference>
<dbReference type="PROSITE" id="PS00456">
    <property type="entry name" value="NA_SOLUT_SYMP_1"/>
    <property type="match status" value="1"/>
</dbReference>
<dbReference type="PROSITE" id="PS50283">
    <property type="entry name" value="NA_SOLUT_SYMP_3"/>
    <property type="match status" value="1"/>
</dbReference>
<accession>Q99PN0</accession>
<accession>B2RPX6</accession>
<keyword id="KW-1003">Cell membrane</keyword>
<keyword id="KW-0963">Cytoplasm</keyword>
<keyword id="KW-0325">Glycoprotein</keyword>
<keyword id="KW-0406">Ion transport</keyword>
<keyword id="KW-0472">Membrane</keyword>
<keyword id="KW-0479">Metal-binding</keyword>
<keyword id="KW-0597">Phosphoprotein</keyword>
<keyword id="KW-1185">Reference proteome</keyword>
<keyword id="KW-0915">Sodium</keyword>
<keyword id="KW-0739">Sodium transport</keyword>
<keyword id="KW-0769">Symport</keyword>
<keyword id="KW-0812">Transmembrane</keyword>
<keyword id="KW-1133">Transmembrane helix</keyword>
<keyword id="KW-0813">Transport</keyword>
<protein>
    <recommendedName>
        <fullName>Sodium/iodide cotransporter</fullName>
        <shortName>Na(+)/I(-) cotransporter</shortName>
    </recommendedName>
    <alternativeName>
        <fullName evidence="8">Sodium-iodide symporter</fullName>
        <shortName>Na(+)/I(-) symporter</shortName>
    </alternativeName>
    <alternativeName>
        <fullName>Solute carrier family 5 member 5</fullName>
    </alternativeName>
</protein>
<sequence>MEGAEAGARATFGPWDYGVFATMLLVSTGIGLWVGLARGGQRSADDFFTGGRQLAAVPVGLSLAASFMSAVQVLGVPAEAARYGLKFLWMCVGQLLNSLLTALLFLPIFYRLGLTSTYQYLELRFSRAVRLCGTLQYLVATMLYTGIVIYAPALILNQVTGLDIWASLLSTGIICTLYTTVGGMKAVVWTDVFQVVVMLVGFWVILARGVMLMGGPWNVLSLAQNHSRINLMDFDPDPRSRYTFWTFVVGGSLVWLSMYGVNQAQVQRYVACHTERKAKLALLVNQLGLFLIVASAACCGIVMFVYYKDCDPLLTGRIAAPDQYMPLLVLDIFEDLPGVPGLFLACAYSGTLSTASTSINAMAAVTVEDLIKPRMPSLAPRKLVFISKGLSFIYGSTCLTVAALSSLLGGGVLQGSFTVMGVISGPLLGAFTLGMLLPACNTPGVLSGLTAGLAVSLWVAVGATLYPPGEQTMGVLPTSAAGCTNASVLPSPPGAANTSRGIPSSGMDSGRPAFADTFYAVSYLYYGALGTLTTMLCGALISYLTGPTKRSSLGPGLLWWDLARQTASVAPKEDTTTLEDSLVKGPEDIPAATKKPPGFRPEAETHPLYLGHDVETNL</sequence>
<feature type="chain" id="PRO_0000105384" description="Sodium/iodide cotransporter">
    <location>
        <begin position="1"/>
        <end position="618"/>
    </location>
</feature>
<feature type="topological domain" description="Extracellular" evidence="1">
    <location>
        <begin position="1"/>
        <end position="14"/>
    </location>
</feature>
<feature type="transmembrane region" description="Helical; Name=1" evidence="1">
    <location>
        <begin position="15"/>
        <end position="31"/>
    </location>
</feature>
<feature type="topological domain" description="Cytoplasmic" evidence="1">
    <location>
        <begin position="32"/>
        <end position="56"/>
    </location>
</feature>
<feature type="transmembrane region" description="Discontinuously helical; Name=2" evidence="1">
    <location>
        <begin position="57"/>
        <end position="80"/>
    </location>
</feature>
<feature type="topological domain" description="Extracellular" evidence="1">
    <location>
        <begin position="81"/>
        <end position="84"/>
    </location>
</feature>
<feature type="transmembrane region" description="Helical; Name=3" evidence="1">
    <location>
        <begin position="85"/>
        <end position="105"/>
    </location>
</feature>
<feature type="topological domain" description="Cytoplasmic" evidence="1">
    <location>
        <begin position="106"/>
        <end position="130"/>
    </location>
</feature>
<feature type="transmembrane region" description="Helical; Name=4" evidence="1">
    <location>
        <begin position="131"/>
        <end position="157"/>
    </location>
</feature>
<feature type="topological domain" description="Extracellular" evidence="1">
    <location>
        <begin position="158"/>
        <end position="163"/>
    </location>
</feature>
<feature type="transmembrane region" description="Helical; Name=5" evidence="1">
    <location>
        <begin position="164"/>
        <end position="181"/>
    </location>
</feature>
<feature type="topological domain" description="Cytoplasmic" evidence="1">
    <location>
        <begin position="182"/>
        <end position="189"/>
    </location>
</feature>
<feature type="transmembrane region" description="Helical; Name=6" evidence="1">
    <location>
        <begin position="190"/>
        <end position="208"/>
    </location>
</feature>
<feature type="topological domain" description="Extracellular" evidence="1">
    <location>
        <begin position="209"/>
        <end position="243"/>
    </location>
</feature>
<feature type="transmembrane region" description="Discontinuously helical; Name=7" evidence="1">
    <location>
        <begin position="244"/>
        <end position="266"/>
    </location>
</feature>
<feature type="topological domain" description="Cytoplasmic" evidence="1">
    <location>
        <begin position="267"/>
        <end position="278"/>
    </location>
</feature>
<feature type="transmembrane region" description="Helical; Name=8" evidence="1">
    <location>
        <begin position="279"/>
        <end position="301"/>
    </location>
</feature>
<feature type="topological domain" description="Extracellular" evidence="1">
    <location>
        <begin position="302"/>
        <end position="335"/>
    </location>
</feature>
<feature type="transmembrane region" description="Helical; Name=9" evidence="1">
    <location>
        <begin position="336"/>
        <end position="363"/>
    </location>
</feature>
<feature type="topological domain" description="Cytoplasmic" evidence="1">
    <location>
        <begin position="364"/>
        <end position="386"/>
    </location>
</feature>
<feature type="transmembrane region" description="Helical; Name=10" evidence="1">
    <location>
        <begin position="387"/>
        <end position="408"/>
    </location>
</feature>
<feature type="topological domain" description="Extracellular" evidence="1">
    <location>
        <begin position="409"/>
        <end position="411"/>
    </location>
</feature>
<feature type="transmembrane region" description="Helical; Name=11" evidence="1">
    <location>
        <begin position="412"/>
        <end position="437"/>
    </location>
</feature>
<feature type="topological domain" description="Cytoplasmic" evidence="1">
    <location>
        <begin position="438"/>
        <end position="441"/>
    </location>
</feature>
<feature type="transmembrane region" description="Helical; Name=12" evidence="1">
    <location>
        <begin position="442"/>
        <end position="465"/>
    </location>
</feature>
<feature type="topological domain" description="Extracellular" evidence="1">
    <location>
        <begin position="466"/>
        <end position="520"/>
    </location>
</feature>
<feature type="transmembrane region" description="Helical; Name=13" evidence="1">
    <location>
        <begin position="521"/>
        <end position="545"/>
    </location>
</feature>
<feature type="topological domain" description="Cytoplasmic" evidence="1">
    <location>
        <begin position="546"/>
        <end position="618"/>
    </location>
</feature>
<feature type="region of interest" description="Disordered" evidence="4">
    <location>
        <begin position="571"/>
        <end position="618"/>
    </location>
</feature>
<feature type="compositionally biased region" description="Basic and acidic residues" evidence="4">
    <location>
        <begin position="571"/>
        <end position="587"/>
    </location>
</feature>
<feature type="binding site" evidence="1">
    <location>
        <position position="69"/>
    </location>
    <ligand>
        <name>Na(+)</name>
        <dbReference type="ChEBI" id="CHEBI:29101"/>
        <label>1</label>
    </ligand>
</feature>
<feature type="binding site" evidence="1">
    <location>
        <position position="71"/>
    </location>
    <ligand>
        <name>Na(+)</name>
        <dbReference type="ChEBI" id="CHEBI:29101"/>
        <label>1</label>
    </ligand>
</feature>
<feature type="binding site" evidence="1">
    <location>
        <position position="72"/>
    </location>
    <ligand>
        <name>Na(+)</name>
        <dbReference type="ChEBI" id="CHEBI:29101"/>
        <label>1</label>
    </ligand>
</feature>
<feature type="binding site" evidence="1">
    <location>
        <position position="72"/>
    </location>
    <ligand>
        <name>Na(+)</name>
        <dbReference type="ChEBI" id="CHEBI:29101"/>
        <label>2</label>
    </ligand>
</feature>
<feature type="binding site" evidence="1">
    <location>
        <position position="76"/>
    </location>
    <ligand>
        <name>iodide</name>
        <dbReference type="ChEBI" id="CHEBI:16382"/>
    </ligand>
</feature>
<feature type="binding site" evidence="1">
    <location>
        <position position="90"/>
    </location>
    <ligand>
        <name>iodide</name>
        <dbReference type="ChEBI" id="CHEBI:16382"/>
    </ligand>
</feature>
<feature type="binding site" evidence="1">
    <location>
        <position position="144"/>
    </location>
    <ligand>
        <name>Na(+)</name>
        <dbReference type="ChEBI" id="CHEBI:29101"/>
        <label>1</label>
    </ligand>
</feature>
<feature type="binding site" evidence="1">
    <location>
        <position position="144"/>
    </location>
    <ligand>
        <name>Na(+)</name>
        <dbReference type="ChEBI" id="CHEBI:29101"/>
        <label>2</label>
    </ligand>
</feature>
<feature type="binding site" evidence="1">
    <location>
        <position position="255"/>
    </location>
    <ligand>
        <name>iodide</name>
        <dbReference type="ChEBI" id="CHEBI:16382"/>
    </ligand>
</feature>
<feature type="binding site" evidence="1">
    <location>
        <position position="258"/>
    </location>
    <ligand>
        <name>Na(+)</name>
        <dbReference type="ChEBI" id="CHEBI:29101"/>
        <label>2</label>
    </ligand>
</feature>
<feature type="binding site" evidence="1">
    <location>
        <position position="413"/>
    </location>
    <ligand>
        <name>iodide</name>
        <dbReference type="ChEBI" id="CHEBI:16382"/>
    </ligand>
</feature>
<feature type="binding site" evidence="1">
    <location>
        <position position="416"/>
    </location>
    <ligand>
        <name>Na(+)</name>
        <dbReference type="ChEBI" id="CHEBI:29101"/>
        <label>2</label>
    </ligand>
</feature>
<feature type="binding site" evidence="1">
    <location>
        <position position="417"/>
    </location>
    <ligand>
        <name>iodide</name>
        <dbReference type="ChEBI" id="CHEBI:16382"/>
    </ligand>
</feature>
<feature type="binding site" evidence="1">
    <location>
        <position position="417"/>
    </location>
    <ligand>
        <name>Na(+)</name>
        <dbReference type="ChEBI" id="CHEBI:29101"/>
        <label>2</label>
    </ligand>
</feature>
<feature type="modified residue" description="Phosphoserine; by PKA" evidence="3">
    <location>
        <position position="551"/>
    </location>
</feature>
<feature type="glycosylation site" description="N-linked (GlcNAc...) asparagine" evidence="3">
    <location>
        <position position="485"/>
    </location>
</feature>
<feature type="glycosylation site" description="N-linked (GlcNAc...) asparagine" evidence="3">
    <location>
        <position position="497"/>
    </location>
</feature>
<gene>
    <name type="primary">Slc5a5</name>
    <name evidence="9" type="synonym">Nis</name>
</gene>
<organism>
    <name type="scientific">Mus musculus</name>
    <name type="common">Mouse</name>
    <dbReference type="NCBI Taxonomy" id="10090"/>
    <lineage>
        <taxon>Eukaryota</taxon>
        <taxon>Metazoa</taxon>
        <taxon>Chordata</taxon>
        <taxon>Craniata</taxon>
        <taxon>Vertebrata</taxon>
        <taxon>Euteleostomi</taxon>
        <taxon>Mammalia</taxon>
        <taxon>Eutheria</taxon>
        <taxon>Euarchontoglires</taxon>
        <taxon>Glires</taxon>
        <taxon>Rodentia</taxon>
        <taxon>Myomorpha</taxon>
        <taxon>Muroidea</taxon>
        <taxon>Muridae</taxon>
        <taxon>Murinae</taxon>
        <taxon>Mus</taxon>
        <taxon>Mus</taxon>
    </lineage>
</organism>
<evidence type="ECO:0000250" key="1">
    <source>
        <dbReference type="UniProtKB" id="Q63008"/>
    </source>
</evidence>
<evidence type="ECO:0000250" key="2">
    <source>
        <dbReference type="UniProtKB" id="Q92911"/>
    </source>
</evidence>
<evidence type="ECO:0000255" key="3"/>
<evidence type="ECO:0000256" key="4">
    <source>
        <dbReference type="SAM" id="MobiDB-lite"/>
    </source>
</evidence>
<evidence type="ECO:0000269" key="5">
    <source>
    </source>
</evidence>
<evidence type="ECO:0000269" key="6">
    <source>
    </source>
</evidence>
<evidence type="ECO:0000269" key="7">
    <source>
    </source>
</evidence>
<evidence type="ECO:0000303" key="8">
    <source>
    </source>
</evidence>
<evidence type="ECO:0000303" key="9">
    <source>
    </source>
</evidence>
<evidence type="ECO:0000305" key="10"/>